<keyword id="KW-1185">Reference proteome</keyword>
<keyword id="KW-0677">Repeat</keyword>
<keyword id="KW-0853">WD repeat</keyword>
<name>CIAO1_COCIM</name>
<proteinExistence type="inferred from homology"/>
<protein>
    <recommendedName>
        <fullName evidence="1">Probable cytosolic iron-sulfur protein assembly protein 1</fullName>
    </recommendedName>
</protein>
<comment type="function">
    <text evidence="1">Essential component of the cytosolic iron-sulfur (Fe/S) protein assembly machinery. Required for the maturation of extramitochondrial Fe/S proteins.</text>
</comment>
<comment type="similarity">
    <text evidence="1">Belongs to the WD repeat CIA1 family.</text>
</comment>
<organism>
    <name type="scientific">Coccidioides immitis (strain RS)</name>
    <name type="common">Valley fever fungus</name>
    <dbReference type="NCBI Taxonomy" id="246410"/>
    <lineage>
        <taxon>Eukaryota</taxon>
        <taxon>Fungi</taxon>
        <taxon>Dikarya</taxon>
        <taxon>Ascomycota</taxon>
        <taxon>Pezizomycotina</taxon>
        <taxon>Eurotiomycetes</taxon>
        <taxon>Eurotiomycetidae</taxon>
        <taxon>Onygenales</taxon>
        <taxon>Onygenaceae</taxon>
        <taxon>Coccidioides</taxon>
    </lineage>
</organism>
<sequence length="473" mass="52568">MPSSTPGGSLKHLSDLTPPSQDRTWLTSSHPRLPIAATCCADKSVRVYSLVNFTLLSTISGGHKRSVRSCAWKPHVKGESVLATASFDATVGVWRRWDGFGRAERDMLGLAGGLAEADRQEGDDTDGDEEDEDEEWGFAVLLDGHDSEVKSVSWSSGGSLLATCSRDKSIWIWEDLEDGDNNFETVAVLQEHSGDVKWVAWHPEEECLASGSYDDTIRLWREDVDDWGQVACLRGHEGTVWCVEWEAPTSIAGDNGDGAPTTMPIDPENGKLAPCERKKWIEERSMSGPRLVSCSDDKTIRIWRKQPQEKPPPVQYSSIPSTIRPATIDETWIEECQLPAMHDLSIYSVAWSKKTGLIASTGADGRIVIYQERFTSKPPVHTTSEQDKPDSARETQKANGERTAPSTAWEVVACVDAAHEIYEVNHVCWAKRADQRKSQQQNFDNSEMDHANEEEVLLSTGDDGVVRVWTLER</sequence>
<gene>
    <name evidence="1" type="primary">CIA1</name>
    <name type="ORF">CIMG_07182</name>
</gene>
<reference key="1">
    <citation type="journal article" date="2009" name="Genome Res.">
        <title>Comparative genomic analyses of the human fungal pathogens Coccidioides and their relatives.</title>
        <authorList>
            <person name="Sharpton T.J."/>
            <person name="Stajich J.E."/>
            <person name="Rounsley S.D."/>
            <person name="Gardner M.J."/>
            <person name="Wortman J.R."/>
            <person name="Jordar V.S."/>
            <person name="Maiti R."/>
            <person name="Kodira C.D."/>
            <person name="Neafsey D.E."/>
            <person name="Zeng Q."/>
            <person name="Hung C.-Y."/>
            <person name="McMahan C."/>
            <person name="Muszewska A."/>
            <person name="Grynberg M."/>
            <person name="Mandel M.A."/>
            <person name="Kellner E.M."/>
            <person name="Barker B.M."/>
            <person name="Galgiani J.N."/>
            <person name="Orbach M.J."/>
            <person name="Kirkland T.N."/>
            <person name="Cole G.T."/>
            <person name="Henn M.R."/>
            <person name="Birren B.W."/>
            <person name="Taylor J.W."/>
        </authorList>
    </citation>
    <scope>NUCLEOTIDE SEQUENCE [LARGE SCALE GENOMIC DNA]</scope>
    <source>
        <strain>RS</strain>
    </source>
</reference>
<reference key="2">
    <citation type="journal article" date="2010" name="Genome Res.">
        <title>Population genomic sequencing of Coccidioides fungi reveals recent hybridization and transposon control.</title>
        <authorList>
            <person name="Neafsey D.E."/>
            <person name="Barker B.M."/>
            <person name="Sharpton T.J."/>
            <person name="Stajich J.E."/>
            <person name="Park D.J."/>
            <person name="Whiston E."/>
            <person name="Hung C.-Y."/>
            <person name="McMahan C."/>
            <person name="White J."/>
            <person name="Sykes S."/>
            <person name="Heiman D."/>
            <person name="Young S."/>
            <person name="Zeng Q."/>
            <person name="Abouelleil A."/>
            <person name="Aftuck L."/>
            <person name="Bessette D."/>
            <person name="Brown A."/>
            <person name="FitzGerald M."/>
            <person name="Lui A."/>
            <person name="Macdonald J.P."/>
            <person name="Priest M."/>
            <person name="Orbach M.J."/>
            <person name="Galgiani J.N."/>
            <person name="Kirkland T.N."/>
            <person name="Cole G.T."/>
            <person name="Birren B.W."/>
            <person name="Henn M.R."/>
            <person name="Taylor J.W."/>
            <person name="Rounsley S.D."/>
        </authorList>
    </citation>
    <scope>GENOME REANNOTATION</scope>
    <source>
        <strain>RS</strain>
    </source>
</reference>
<dbReference type="EMBL" id="GG704912">
    <property type="protein sequence ID" value="EAS31703.3"/>
    <property type="molecule type" value="Genomic_DNA"/>
</dbReference>
<dbReference type="RefSeq" id="XP_001243286.1">
    <property type="nucleotide sequence ID" value="XM_001243285.2"/>
</dbReference>
<dbReference type="SMR" id="Q1DR81"/>
<dbReference type="FunCoup" id="Q1DR81">
    <property type="interactions" value="62"/>
</dbReference>
<dbReference type="STRING" id="246410.Q1DR81"/>
<dbReference type="GeneID" id="4561388"/>
<dbReference type="KEGG" id="cim:CIMG_07182"/>
<dbReference type="VEuPathDB" id="FungiDB:CIMG_07182"/>
<dbReference type="InParanoid" id="Q1DR81"/>
<dbReference type="OMA" id="IREIRWS"/>
<dbReference type="OrthoDB" id="284782at2759"/>
<dbReference type="Proteomes" id="UP000001261">
    <property type="component" value="Unassembled WGS sequence"/>
</dbReference>
<dbReference type="GO" id="GO:0097361">
    <property type="term" value="C:cytosolic [4Fe-4S] assembly targeting complex"/>
    <property type="evidence" value="ECO:0007669"/>
    <property type="project" value="InterPro"/>
</dbReference>
<dbReference type="GO" id="GO:0016226">
    <property type="term" value="P:iron-sulfur cluster assembly"/>
    <property type="evidence" value="ECO:0007669"/>
    <property type="project" value="UniProtKB-UniRule"/>
</dbReference>
<dbReference type="Gene3D" id="2.130.10.10">
    <property type="entry name" value="YVTN repeat-like/Quinoprotein amine dehydrogenase"/>
    <property type="match status" value="2"/>
</dbReference>
<dbReference type="HAMAP" id="MF_03037">
    <property type="entry name" value="ciao1"/>
    <property type="match status" value="1"/>
</dbReference>
<dbReference type="InterPro" id="IPR028608">
    <property type="entry name" value="CIAO1/Cia1"/>
</dbReference>
<dbReference type="InterPro" id="IPR020472">
    <property type="entry name" value="G-protein_beta_WD-40_rep"/>
</dbReference>
<dbReference type="InterPro" id="IPR015943">
    <property type="entry name" value="WD40/YVTN_repeat-like_dom_sf"/>
</dbReference>
<dbReference type="InterPro" id="IPR036322">
    <property type="entry name" value="WD40_repeat_dom_sf"/>
</dbReference>
<dbReference type="InterPro" id="IPR001680">
    <property type="entry name" value="WD40_rpt"/>
</dbReference>
<dbReference type="PANTHER" id="PTHR19920:SF0">
    <property type="entry name" value="CYTOSOLIC IRON-SULFUR PROTEIN ASSEMBLY PROTEIN CIAO1-RELATED"/>
    <property type="match status" value="1"/>
</dbReference>
<dbReference type="PANTHER" id="PTHR19920">
    <property type="entry name" value="WD40 PROTEIN CIAO1"/>
    <property type="match status" value="1"/>
</dbReference>
<dbReference type="Pfam" id="PF00400">
    <property type="entry name" value="WD40"/>
    <property type="match status" value="5"/>
</dbReference>
<dbReference type="PRINTS" id="PR00320">
    <property type="entry name" value="GPROTEINBRPT"/>
</dbReference>
<dbReference type="SMART" id="SM00320">
    <property type="entry name" value="WD40"/>
    <property type="match status" value="7"/>
</dbReference>
<dbReference type="SUPFAM" id="SSF50978">
    <property type="entry name" value="WD40 repeat-like"/>
    <property type="match status" value="1"/>
</dbReference>
<dbReference type="PROSITE" id="PS50082">
    <property type="entry name" value="WD_REPEATS_2"/>
    <property type="match status" value="4"/>
</dbReference>
<dbReference type="PROSITE" id="PS50294">
    <property type="entry name" value="WD_REPEATS_REGION"/>
    <property type="match status" value="1"/>
</dbReference>
<feature type="chain" id="PRO_0000382512" description="Probable cytosolic iron-sulfur protein assembly protein 1">
    <location>
        <begin position="1"/>
        <end position="473"/>
    </location>
</feature>
<feature type="repeat" description="WD 1">
    <location>
        <begin position="11"/>
        <end position="58"/>
    </location>
</feature>
<feature type="repeat" description="WD 2">
    <location>
        <begin position="62"/>
        <end position="104"/>
    </location>
</feature>
<feature type="repeat" description="WD 3">
    <location>
        <begin position="144"/>
        <end position="183"/>
    </location>
</feature>
<feature type="repeat" description="WD 4">
    <location>
        <begin position="191"/>
        <end position="230"/>
    </location>
</feature>
<feature type="repeat" description="WD 5">
    <location>
        <begin position="235"/>
        <end position="313"/>
    </location>
</feature>
<feature type="repeat" description="WD 6">
    <location>
        <begin position="341"/>
        <end position="380"/>
    </location>
</feature>
<feature type="repeat" description="WD 7">
    <location>
        <begin position="438"/>
        <end position="473"/>
    </location>
</feature>
<feature type="region of interest" description="Disordered" evidence="2">
    <location>
        <begin position="1"/>
        <end position="25"/>
    </location>
</feature>
<feature type="region of interest" description="Disordered" evidence="2">
    <location>
        <begin position="112"/>
        <end position="133"/>
    </location>
</feature>
<feature type="region of interest" description="Disordered" evidence="2">
    <location>
        <begin position="377"/>
        <end position="405"/>
    </location>
</feature>
<feature type="compositionally biased region" description="Acidic residues" evidence="2">
    <location>
        <begin position="123"/>
        <end position="133"/>
    </location>
</feature>
<feature type="compositionally biased region" description="Basic and acidic residues" evidence="2">
    <location>
        <begin position="384"/>
        <end position="400"/>
    </location>
</feature>
<accession>Q1DR81</accession>
<accession>J3K3L2</accession>
<evidence type="ECO:0000255" key="1">
    <source>
        <dbReference type="HAMAP-Rule" id="MF_03037"/>
    </source>
</evidence>
<evidence type="ECO:0000256" key="2">
    <source>
        <dbReference type="SAM" id="MobiDB-lite"/>
    </source>
</evidence>